<sequence length="153" mass="16920">MYSDKVFDHFQNPRNVGKIEDADGVGTVGNPVCGDLMTIYIKVKDNRIEDIKFQTFGCAAAIATSSMATEMAKGKTIEEALKITRDAVAEALGGLPKQKMHCSNLAADALRRAIVDYFRKNGKIDKIKELGLEKELEKMEKGEMDDHGEYCEA</sequence>
<name>ISCU1_ARCFU</name>
<evidence type="ECO:0000250" key="1"/>
<evidence type="ECO:0000250" key="2">
    <source>
        <dbReference type="UniProtKB" id="P0DMG2"/>
    </source>
</evidence>
<evidence type="ECO:0000305" key="3"/>
<dbReference type="EMBL" id="AE000782">
    <property type="protein sequence ID" value="AAB90674.1"/>
    <property type="molecule type" value="Genomic_DNA"/>
</dbReference>
<dbReference type="PIR" id="A69273">
    <property type="entry name" value="A69273"/>
</dbReference>
<dbReference type="SMR" id="P0DMG1"/>
<dbReference type="STRING" id="224325.AF_0185"/>
<dbReference type="PaxDb" id="224325-AF_0185"/>
<dbReference type="EnsemblBacteria" id="AAB90674">
    <property type="protein sequence ID" value="AAB90674"/>
    <property type="gene ID" value="AF_0565"/>
</dbReference>
<dbReference type="KEGG" id="afu:AF_0565"/>
<dbReference type="eggNOG" id="arCOG02077">
    <property type="taxonomic scope" value="Archaea"/>
</dbReference>
<dbReference type="HOGENOM" id="CLU_079283_5_1_2"/>
<dbReference type="OrthoDB" id="319865at2157"/>
<dbReference type="PhylomeDB" id="P0DMG1"/>
<dbReference type="Proteomes" id="UP000002199">
    <property type="component" value="Chromosome"/>
</dbReference>
<dbReference type="GO" id="GO:0051537">
    <property type="term" value="F:2 iron, 2 sulfur cluster binding"/>
    <property type="evidence" value="ECO:0007669"/>
    <property type="project" value="UniProtKB-KW"/>
</dbReference>
<dbReference type="GO" id="GO:0005506">
    <property type="term" value="F:iron ion binding"/>
    <property type="evidence" value="ECO:0007669"/>
    <property type="project" value="InterPro"/>
</dbReference>
<dbReference type="GO" id="GO:0016226">
    <property type="term" value="P:iron-sulfur cluster assembly"/>
    <property type="evidence" value="ECO:0007669"/>
    <property type="project" value="InterPro"/>
</dbReference>
<dbReference type="CDD" id="cd06664">
    <property type="entry name" value="IscU_like"/>
    <property type="match status" value="1"/>
</dbReference>
<dbReference type="Gene3D" id="3.90.1010.10">
    <property type="match status" value="1"/>
</dbReference>
<dbReference type="InterPro" id="IPR017787">
    <property type="entry name" value="NIF_FeS_clus_asmbl_NifU-like"/>
</dbReference>
<dbReference type="InterPro" id="IPR002871">
    <property type="entry name" value="NIF_FeS_clus_asmbl_NifU_N"/>
</dbReference>
<dbReference type="NCBIfam" id="TIGR03419">
    <property type="entry name" value="NifU_clost"/>
    <property type="match status" value="1"/>
</dbReference>
<dbReference type="PANTHER" id="PTHR10093">
    <property type="entry name" value="IRON-SULFUR CLUSTER ASSEMBLY ENZYME NIFU HOMOLOG"/>
    <property type="match status" value="1"/>
</dbReference>
<dbReference type="Pfam" id="PF01592">
    <property type="entry name" value="NifU_N"/>
    <property type="match status" value="1"/>
</dbReference>
<dbReference type="SUPFAM" id="SSF82649">
    <property type="entry name" value="SufE/NifU"/>
    <property type="match status" value="1"/>
</dbReference>
<reference key="1">
    <citation type="journal article" date="1997" name="Nature">
        <title>The complete genome sequence of the hyperthermophilic, sulphate-reducing archaeon Archaeoglobus fulgidus.</title>
        <authorList>
            <person name="Klenk H.-P."/>
            <person name="Clayton R.A."/>
            <person name="Tomb J.-F."/>
            <person name="White O."/>
            <person name="Nelson K.E."/>
            <person name="Ketchum K.A."/>
            <person name="Dodson R.J."/>
            <person name="Gwinn M.L."/>
            <person name="Hickey E.K."/>
            <person name="Peterson J.D."/>
            <person name="Richardson D.L."/>
            <person name="Kerlavage A.R."/>
            <person name="Graham D.E."/>
            <person name="Kyrpides N.C."/>
            <person name="Fleischmann R.D."/>
            <person name="Quackenbush J."/>
            <person name="Lee N.H."/>
            <person name="Sutton G.G."/>
            <person name="Gill S.R."/>
            <person name="Kirkness E.F."/>
            <person name="Dougherty B.A."/>
            <person name="McKenney K."/>
            <person name="Adams M.D."/>
            <person name="Loftus B.J."/>
            <person name="Peterson S.N."/>
            <person name="Reich C.I."/>
            <person name="McNeil L.K."/>
            <person name="Badger J.H."/>
            <person name="Glodek A."/>
            <person name="Zhou L."/>
            <person name="Overbeek R."/>
            <person name="Gocayne J.D."/>
            <person name="Weidman J.F."/>
            <person name="McDonald L.A."/>
            <person name="Utterback T.R."/>
            <person name="Cotton M.D."/>
            <person name="Spriggs T."/>
            <person name="Artiach P."/>
            <person name="Kaine B.P."/>
            <person name="Sykes S.M."/>
            <person name="Sadow P.W."/>
            <person name="D'Andrea K.P."/>
            <person name="Bowman C."/>
            <person name="Fujii C."/>
            <person name="Garland S.A."/>
            <person name="Mason T.M."/>
            <person name="Olsen G.J."/>
            <person name="Fraser C.M."/>
            <person name="Smith H.O."/>
            <person name="Woese C.R."/>
            <person name="Venter J.C."/>
        </authorList>
    </citation>
    <scope>NUCLEOTIDE SEQUENCE [LARGE SCALE GENOMIC DNA]</scope>
    <source>
        <strain>ATCC 49558 / DSM 4304 / JCM 9628 / NBRC 100126 / VC-16</strain>
    </source>
</reference>
<comment type="function">
    <text evidence="1">A scaffold on which IscS assembles Fe-S clusters. Subsequently gives the nascent cluster to other proteins. It is likely that Fe-S cluster coordination is flexible as the role of this complex is to build and then hand off Fe-S clusters (By similarity).</text>
</comment>
<comment type="subunit">
    <text evidence="1">Forms a heterotetramer with IscS2.</text>
</comment>
<comment type="similarity">
    <text evidence="3">Belongs to the NifU family.</text>
</comment>
<feature type="chain" id="PRO_0000428754" description="Iron-sulfur cluster assembly scaffold protein IscU 1">
    <location>
        <begin position="1"/>
        <end position="153"/>
    </location>
</feature>
<feature type="binding site" evidence="2">
    <location>
        <position position="33"/>
    </location>
    <ligand>
        <name>[2Fe-2S] cluster</name>
        <dbReference type="ChEBI" id="CHEBI:190135"/>
        <note>ligand shared with IscS</note>
    </ligand>
</feature>
<feature type="binding site" evidence="2">
    <location>
        <position position="58"/>
    </location>
    <ligand>
        <name>[2Fe-2S] cluster</name>
        <dbReference type="ChEBI" id="CHEBI:190135"/>
        <note>ligand shared with IscS</note>
    </ligand>
</feature>
<feature type="binding site" evidence="2">
    <location>
        <position position="101"/>
    </location>
    <ligand>
        <name>[2Fe-2S] cluster</name>
        <dbReference type="ChEBI" id="CHEBI:190135"/>
        <note>ligand shared with IscS</note>
    </ligand>
</feature>
<feature type="binding site" evidence="2">
    <location>
        <position position="102"/>
    </location>
    <ligand>
        <name>[2Fe-2S] cluster</name>
        <dbReference type="ChEBI" id="CHEBI:190135"/>
        <note>ligand shared with IscS</note>
    </ligand>
</feature>
<accession>P0DMG1</accession>
<accession>O34393</accession>
<protein>
    <recommendedName>
        <fullName>Iron-sulfur cluster assembly scaffold protein IscU 1</fullName>
    </recommendedName>
    <alternativeName>
        <fullName>Sulfur acceptor protein IscU 1</fullName>
    </alternativeName>
</protein>
<gene>
    <name type="primary">iscU1</name>
    <name type="ordered locus">AF_0185</name>
</gene>
<organism>
    <name type="scientific">Archaeoglobus fulgidus (strain ATCC 49558 / DSM 4304 / JCM 9628 / NBRC 100126 / VC-16)</name>
    <dbReference type="NCBI Taxonomy" id="224325"/>
    <lineage>
        <taxon>Archaea</taxon>
        <taxon>Methanobacteriati</taxon>
        <taxon>Methanobacteriota</taxon>
        <taxon>Archaeoglobi</taxon>
        <taxon>Archaeoglobales</taxon>
        <taxon>Archaeoglobaceae</taxon>
        <taxon>Archaeoglobus</taxon>
    </lineage>
</organism>
<proteinExistence type="inferred from homology"/>
<keyword id="KW-0001">2Fe-2S</keyword>
<keyword id="KW-0408">Iron</keyword>
<keyword id="KW-0411">Iron-sulfur</keyword>
<keyword id="KW-0479">Metal-binding</keyword>
<keyword id="KW-1185">Reference proteome</keyword>